<feature type="chain" id="PRO_0000284962" description="Tetraspanin-3">
    <location>
        <begin position="1"/>
        <end position="253"/>
    </location>
</feature>
<feature type="topological domain" description="Cytoplasmic" evidence="2">
    <location>
        <begin position="1"/>
        <end position="11"/>
    </location>
</feature>
<feature type="transmembrane region" description="Helical" evidence="2">
    <location>
        <begin position="12"/>
        <end position="32"/>
    </location>
</feature>
<feature type="topological domain" description="Extracellular" evidence="2">
    <location>
        <begin position="33"/>
        <end position="50"/>
    </location>
</feature>
<feature type="transmembrane region" description="Helical" evidence="2">
    <location>
        <begin position="51"/>
        <end position="71"/>
    </location>
</feature>
<feature type="topological domain" description="Cytoplasmic" evidence="2">
    <location>
        <begin position="72"/>
        <end position="85"/>
    </location>
</feature>
<feature type="transmembrane region" description="Helical" evidence="2">
    <location>
        <begin position="86"/>
        <end position="106"/>
    </location>
</feature>
<feature type="topological domain" description="Extracellular" evidence="2">
    <location>
        <begin position="107"/>
        <end position="212"/>
    </location>
</feature>
<feature type="transmembrane region" description="Helical" evidence="2">
    <location>
        <begin position="213"/>
        <end position="233"/>
    </location>
</feature>
<feature type="topological domain" description="Cytoplasmic" evidence="2">
    <location>
        <begin position="234"/>
        <end position="253"/>
    </location>
</feature>
<feature type="glycosylation site" description="N-linked (GlcNAc...) asparagine" evidence="2">
    <location>
        <position position="127"/>
    </location>
</feature>
<feature type="glycosylation site" description="N-linked (GlcNAc...) asparagine" evidence="2">
    <location>
        <position position="152"/>
    </location>
</feature>
<feature type="glycosylation site" description="N-linked (GlcNAc...) asparagine" evidence="2">
    <location>
        <position position="167"/>
    </location>
</feature>
<feature type="glycosylation site" description="N-linked (GlcNAc...) asparagine" evidence="2">
    <location>
        <position position="183"/>
    </location>
</feature>
<accession>Q3SZR9</accession>
<evidence type="ECO:0000250" key="1"/>
<evidence type="ECO:0000255" key="2"/>
<evidence type="ECO:0000305" key="3"/>
<protein>
    <recommendedName>
        <fullName>Tetraspanin-3</fullName>
        <shortName>Tspan-3</shortName>
    </recommendedName>
</protein>
<name>TSN3_BOVIN</name>
<organism>
    <name type="scientific">Bos taurus</name>
    <name type="common">Bovine</name>
    <dbReference type="NCBI Taxonomy" id="9913"/>
    <lineage>
        <taxon>Eukaryota</taxon>
        <taxon>Metazoa</taxon>
        <taxon>Chordata</taxon>
        <taxon>Craniata</taxon>
        <taxon>Vertebrata</taxon>
        <taxon>Euteleostomi</taxon>
        <taxon>Mammalia</taxon>
        <taxon>Eutheria</taxon>
        <taxon>Laurasiatheria</taxon>
        <taxon>Artiodactyla</taxon>
        <taxon>Ruminantia</taxon>
        <taxon>Pecora</taxon>
        <taxon>Bovidae</taxon>
        <taxon>Bovinae</taxon>
        <taxon>Bos</taxon>
    </lineage>
</organism>
<reference key="1">
    <citation type="submission" date="2005-08" db="EMBL/GenBank/DDBJ databases">
        <authorList>
            <consortium name="NIH - Mammalian Gene Collection (MGC) project"/>
        </authorList>
    </citation>
    <scope>NUCLEOTIDE SEQUENCE [LARGE SCALE MRNA]</scope>
    <source>
        <strain>Crossbred X Angus</strain>
        <tissue>Liver</tissue>
    </source>
</reference>
<proteinExistence type="evidence at transcript level"/>
<gene>
    <name type="primary">TSPAN3</name>
</gene>
<dbReference type="EMBL" id="BC102734">
    <property type="protein sequence ID" value="AAI02735.1"/>
    <property type="molecule type" value="mRNA"/>
</dbReference>
<dbReference type="RefSeq" id="NP_001030564.1">
    <property type="nucleotide sequence ID" value="NM_001035487.1"/>
</dbReference>
<dbReference type="SMR" id="Q3SZR9"/>
<dbReference type="FunCoup" id="Q3SZR9">
    <property type="interactions" value="692"/>
</dbReference>
<dbReference type="IntAct" id="Q3SZR9">
    <property type="interactions" value="1"/>
</dbReference>
<dbReference type="STRING" id="9913.ENSBTAP00000003131"/>
<dbReference type="GlyCosmos" id="Q3SZR9">
    <property type="glycosylation" value="4 sites, No reported glycans"/>
</dbReference>
<dbReference type="GlyGen" id="Q3SZR9">
    <property type="glycosylation" value="4 sites"/>
</dbReference>
<dbReference type="PaxDb" id="9913-ENSBTAP00000003131"/>
<dbReference type="Ensembl" id="ENSBTAT00000003131.6">
    <property type="protein sequence ID" value="ENSBTAP00000003131.6"/>
    <property type="gene ID" value="ENSBTAG00000002415.7"/>
</dbReference>
<dbReference type="GeneID" id="616881"/>
<dbReference type="KEGG" id="bta:616881"/>
<dbReference type="CTD" id="10099"/>
<dbReference type="VEuPathDB" id="HostDB:ENSBTAG00000002415"/>
<dbReference type="VGNC" id="VGNC:36436">
    <property type="gene designation" value="TSPAN3"/>
</dbReference>
<dbReference type="eggNOG" id="KOG3882">
    <property type="taxonomic scope" value="Eukaryota"/>
</dbReference>
<dbReference type="GeneTree" id="ENSGT00940000154954"/>
<dbReference type="HOGENOM" id="CLU_055524_5_2_1"/>
<dbReference type="InParanoid" id="Q3SZR9"/>
<dbReference type="OMA" id="ISCCKIA"/>
<dbReference type="OrthoDB" id="9993879at2759"/>
<dbReference type="Proteomes" id="UP000009136">
    <property type="component" value="Chromosome 21"/>
</dbReference>
<dbReference type="Bgee" id="ENSBTAG00000002415">
    <property type="expression patterns" value="Expressed in abomasum and 103 other cell types or tissues"/>
</dbReference>
<dbReference type="GO" id="GO:0005886">
    <property type="term" value="C:plasma membrane"/>
    <property type="evidence" value="ECO:0000318"/>
    <property type="project" value="GO_Central"/>
</dbReference>
<dbReference type="CDD" id="cd03163">
    <property type="entry name" value="TM4SF8_like_LEL"/>
    <property type="match status" value="1"/>
</dbReference>
<dbReference type="FunFam" id="1.10.1450.10:FF:000004">
    <property type="entry name" value="Tetraspanin"/>
    <property type="match status" value="1"/>
</dbReference>
<dbReference type="Gene3D" id="1.10.1450.10">
    <property type="entry name" value="Tetraspanin"/>
    <property type="match status" value="1"/>
</dbReference>
<dbReference type="InterPro" id="IPR018499">
    <property type="entry name" value="Tetraspanin/Peripherin"/>
</dbReference>
<dbReference type="InterPro" id="IPR000301">
    <property type="entry name" value="Tetraspanin_animals"/>
</dbReference>
<dbReference type="InterPro" id="IPR018503">
    <property type="entry name" value="Tetraspanin_CS"/>
</dbReference>
<dbReference type="InterPro" id="IPR008952">
    <property type="entry name" value="Tetraspanin_EC2_sf"/>
</dbReference>
<dbReference type="PANTHER" id="PTHR19282">
    <property type="entry name" value="TETRASPANIN"/>
    <property type="match status" value="1"/>
</dbReference>
<dbReference type="PANTHER" id="PTHR19282:SF48">
    <property type="entry name" value="TETRASPANIN-3"/>
    <property type="match status" value="1"/>
</dbReference>
<dbReference type="Pfam" id="PF00335">
    <property type="entry name" value="Tetraspanin"/>
    <property type="match status" value="1"/>
</dbReference>
<dbReference type="PIRSF" id="PIRSF002419">
    <property type="entry name" value="Tetraspanin"/>
    <property type="match status" value="1"/>
</dbReference>
<dbReference type="PRINTS" id="PR00259">
    <property type="entry name" value="TMFOUR"/>
</dbReference>
<dbReference type="SUPFAM" id="SSF48652">
    <property type="entry name" value="Tetraspanin"/>
    <property type="match status" value="1"/>
</dbReference>
<dbReference type="PROSITE" id="PS00421">
    <property type="entry name" value="TM4_1"/>
    <property type="match status" value="1"/>
</dbReference>
<sequence>MGQCGITSSKTVLVFLNLIFWGAAGILCYVGAYVFITYDDYDHFFEDVYTLIPAVVIIAVGALLFIIGLIGCCATIRESRCGLATFVIILLLVFVTEVVVVVLGYVYRAKVENEVDRSIQKVYKTYNGTNPDAASRAIDYVQRQLHCCGIHNYSDWENTDWFKETKNQSVPLSCCRETASSCNGSLANPSDLYAEGCEALVVKKLQEIMMHVIWAALAFAAIQLLGMLCACIVLCRRSRDPAYELLITGGAYA</sequence>
<comment type="function">
    <text evidence="1">Regulates the proliferation and migration of oligodendrocytes, a process essential for normal myelination and repair.</text>
</comment>
<comment type="subunit">
    <text evidence="1">Interacts with claudin-11/CLDN11 and integrins.</text>
</comment>
<comment type="subcellular location">
    <subcellularLocation>
        <location evidence="3">Membrane</location>
        <topology evidence="3">Multi-pass membrane protein</topology>
    </subcellularLocation>
</comment>
<comment type="similarity">
    <text evidence="3">Belongs to the tetraspanin (TM4SF) family.</text>
</comment>
<keyword id="KW-0325">Glycoprotein</keyword>
<keyword id="KW-0472">Membrane</keyword>
<keyword id="KW-1185">Reference proteome</keyword>
<keyword id="KW-0812">Transmembrane</keyword>
<keyword id="KW-1133">Transmembrane helix</keyword>